<protein>
    <recommendedName>
        <fullName>Reduced meiotic recombination protein C1442.04c</fullName>
    </recommendedName>
</protein>
<sequence length="502" mass="55843">MAGVSPVVNHPYTTNSGDFIELGMEPAQKVQVDLDEAFNQMLHDGKVEEVVEAINGSPDLLSESDVENAKNNEHTYDIDNKNFNFEPKNSVNKTETIREELDQAASKILIETLDLHQKEGFEETIVTEEATDAVDLEAKGTTHGENDLDEVPTELNELANEVVDVDDVVSPSSELNAQSVNNILPISDDPKDSTSEAETRDFNWLSKGIVIFPNSSECAFYGNNNDEGMYLYSNGDDLNENTIEDFFGLVRARLESLNLLDSDSELLCEFPDLSLKINEDNVYASQIHLVDILEILTVHCDLEESFSIVFSTQPRFIARYNELVQAVSSSSNSEIDEVEDAETIDSKILEKRNDLNNEEPNSVVAEDGSEIITLDENDQSPNEATEKLRDNDLEESLIKDENLEDVEDENVKLDNYNIDGSLNNADLSQEPITNDGENVDWEATSEDVLERGYESAFPESEGTINSSKRRLSVTTDTENIELSDELASAGTPKKSKLMPSDD</sequence>
<keyword id="KW-0963">Cytoplasm</keyword>
<keyword id="KW-0469">Meiosis</keyword>
<keyword id="KW-0539">Nucleus</keyword>
<keyword id="KW-0597">Phosphoprotein</keyword>
<keyword id="KW-1185">Reference proteome</keyword>
<feature type="chain" id="PRO_0000350756" description="Reduced meiotic recombination protein C1442.04c">
    <location>
        <begin position="1"/>
        <end position="502"/>
    </location>
</feature>
<feature type="region of interest" description="Disordered" evidence="2">
    <location>
        <begin position="353"/>
        <end position="391"/>
    </location>
</feature>
<feature type="region of interest" description="Disordered" evidence="2">
    <location>
        <begin position="420"/>
        <end position="440"/>
    </location>
</feature>
<feature type="region of interest" description="Disordered" evidence="2">
    <location>
        <begin position="454"/>
        <end position="502"/>
    </location>
</feature>
<feature type="compositionally biased region" description="Acidic residues" evidence="2">
    <location>
        <begin position="367"/>
        <end position="378"/>
    </location>
</feature>
<feature type="compositionally biased region" description="Polar residues" evidence="2">
    <location>
        <begin position="420"/>
        <end position="436"/>
    </location>
</feature>
<feature type="compositionally biased region" description="Polar residues" evidence="2">
    <location>
        <begin position="462"/>
        <end position="477"/>
    </location>
</feature>
<feature type="modified residue" description="Phosphoserine" evidence="3">
    <location>
        <position position="328"/>
    </location>
</feature>
<feature type="modified residue" description="Phosphoserine" evidence="3">
    <location>
        <position position="330"/>
    </location>
</feature>
<feature type="modified residue" description="Phosphoserine" evidence="3">
    <location>
        <position position="331"/>
    </location>
</feature>
<proteinExistence type="evidence at protein level"/>
<evidence type="ECO:0000250" key="1"/>
<evidence type="ECO:0000256" key="2">
    <source>
        <dbReference type="SAM" id="MobiDB-lite"/>
    </source>
</evidence>
<evidence type="ECO:0000269" key="3">
    <source>
    </source>
</evidence>
<evidence type="ECO:0000305" key="4"/>
<accession>O94577</accession>
<gene>
    <name type="ORF">SPCC1442.04c</name>
</gene>
<name>RMR1_SCHPO</name>
<reference key="1">
    <citation type="journal article" date="2002" name="Nature">
        <title>The genome sequence of Schizosaccharomyces pombe.</title>
        <authorList>
            <person name="Wood V."/>
            <person name="Gwilliam R."/>
            <person name="Rajandream M.A."/>
            <person name="Lyne M.H."/>
            <person name="Lyne R."/>
            <person name="Stewart A."/>
            <person name="Sgouros J.G."/>
            <person name="Peat N."/>
            <person name="Hayles J."/>
            <person name="Baker S.G."/>
            <person name="Basham D."/>
            <person name="Bowman S."/>
            <person name="Brooks K."/>
            <person name="Brown D."/>
            <person name="Brown S."/>
            <person name="Chillingworth T."/>
            <person name="Churcher C.M."/>
            <person name="Collins M."/>
            <person name="Connor R."/>
            <person name="Cronin A."/>
            <person name="Davis P."/>
            <person name="Feltwell T."/>
            <person name="Fraser A."/>
            <person name="Gentles S."/>
            <person name="Goble A."/>
            <person name="Hamlin N."/>
            <person name="Harris D.E."/>
            <person name="Hidalgo J."/>
            <person name="Hodgson G."/>
            <person name="Holroyd S."/>
            <person name="Hornsby T."/>
            <person name="Howarth S."/>
            <person name="Huckle E.J."/>
            <person name="Hunt S."/>
            <person name="Jagels K."/>
            <person name="James K.D."/>
            <person name="Jones L."/>
            <person name="Jones M."/>
            <person name="Leather S."/>
            <person name="McDonald S."/>
            <person name="McLean J."/>
            <person name="Mooney P."/>
            <person name="Moule S."/>
            <person name="Mungall K.L."/>
            <person name="Murphy L.D."/>
            <person name="Niblett D."/>
            <person name="Odell C."/>
            <person name="Oliver K."/>
            <person name="O'Neil S."/>
            <person name="Pearson D."/>
            <person name="Quail M.A."/>
            <person name="Rabbinowitsch E."/>
            <person name="Rutherford K.M."/>
            <person name="Rutter S."/>
            <person name="Saunders D."/>
            <person name="Seeger K."/>
            <person name="Sharp S."/>
            <person name="Skelton J."/>
            <person name="Simmonds M.N."/>
            <person name="Squares R."/>
            <person name="Squares S."/>
            <person name="Stevens K."/>
            <person name="Taylor K."/>
            <person name="Taylor R.G."/>
            <person name="Tivey A."/>
            <person name="Walsh S.V."/>
            <person name="Warren T."/>
            <person name="Whitehead S."/>
            <person name="Woodward J.R."/>
            <person name="Volckaert G."/>
            <person name="Aert R."/>
            <person name="Robben J."/>
            <person name="Grymonprez B."/>
            <person name="Weltjens I."/>
            <person name="Vanstreels E."/>
            <person name="Rieger M."/>
            <person name="Schaefer M."/>
            <person name="Mueller-Auer S."/>
            <person name="Gabel C."/>
            <person name="Fuchs M."/>
            <person name="Duesterhoeft A."/>
            <person name="Fritzc C."/>
            <person name="Holzer E."/>
            <person name="Moestl D."/>
            <person name="Hilbert H."/>
            <person name="Borzym K."/>
            <person name="Langer I."/>
            <person name="Beck A."/>
            <person name="Lehrach H."/>
            <person name="Reinhardt R."/>
            <person name="Pohl T.M."/>
            <person name="Eger P."/>
            <person name="Zimmermann W."/>
            <person name="Wedler H."/>
            <person name="Wambutt R."/>
            <person name="Purnelle B."/>
            <person name="Goffeau A."/>
            <person name="Cadieu E."/>
            <person name="Dreano S."/>
            <person name="Gloux S."/>
            <person name="Lelaure V."/>
            <person name="Mottier S."/>
            <person name="Galibert F."/>
            <person name="Aves S.J."/>
            <person name="Xiang Z."/>
            <person name="Hunt C."/>
            <person name="Moore K."/>
            <person name="Hurst S.M."/>
            <person name="Lucas M."/>
            <person name="Rochet M."/>
            <person name="Gaillardin C."/>
            <person name="Tallada V.A."/>
            <person name="Garzon A."/>
            <person name="Thode G."/>
            <person name="Daga R.R."/>
            <person name="Cruzado L."/>
            <person name="Jimenez J."/>
            <person name="Sanchez M."/>
            <person name="del Rey F."/>
            <person name="Benito J."/>
            <person name="Dominguez A."/>
            <person name="Revuelta J.L."/>
            <person name="Moreno S."/>
            <person name="Armstrong J."/>
            <person name="Forsburg S.L."/>
            <person name="Cerutti L."/>
            <person name="Lowe T."/>
            <person name="McCombie W.R."/>
            <person name="Paulsen I."/>
            <person name="Potashkin J."/>
            <person name="Shpakovski G.V."/>
            <person name="Ussery D."/>
            <person name="Barrell B.G."/>
            <person name="Nurse P."/>
        </authorList>
    </citation>
    <scope>NUCLEOTIDE SEQUENCE [LARGE SCALE GENOMIC DNA]</scope>
    <source>
        <strain>972 / ATCC 24843</strain>
    </source>
</reference>
<reference key="2">
    <citation type="journal article" date="2011" name="Science">
        <title>Comparative functional genomics of the fission yeasts.</title>
        <authorList>
            <person name="Rhind N."/>
            <person name="Chen Z."/>
            <person name="Yassour M."/>
            <person name="Thompson D.A."/>
            <person name="Haas B.J."/>
            <person name="Habib N."/>
            <person name="Wapinski I."/>
            <person name="Roy S."/>
            <person name="Lin M.F."/>
            <person name="Heiman D.I."/>
            <person name="Young S.K."/>
            <person name="Furuya K."/>
            <person name="Guo Y."/>
            <person name="Pidoux A."/>
            <person name="Chen H.M."/>
            <person name="Robbertse B."/>
            <person name="Goldberg J.M."/>
            <person name="Aoki K."/>
            <person name="Bayne E.H."/>
            <person name="Berlin A.M."/>
            <person name="Desjardins C.A."/>
            <person name="Dobbs E."/>
            <person name="Dukaj L."/>
            <person name="Fan L."/>
            <person name="FitzGerald M.G."/>
            <person name="French C."/>
            <person name="Gujja S."/>
            <person name="Hansen K."/>
            <person name="Keifenheim D."/>
            <person name="Levin J.Z."/>
            <person name="Mosher R.A."/>
            <person name="Mueller C.A."/>
            <person name="Pfiffner J."/>
            <person name="Priest M."/>
            <person name="Russ C."/>
            <person name="Smialowska A."/>
            <person name="Swoboda P."/>
            <person name="Sykes S.M."/>
            <person name="Vaughn M."/>
            <person name="Vengrova S."/>
            <person name="Yoder R."/>
            <person name="Zeng Q."/>
            <person name="Allshire R."/>
            <person name="Baulcombe D."/>
            <person name="Birren B.W."/>
            <person name="Brown W."/>
            <person name="Ekwall K."/>
            <person name="Kellis M."/>
            <person name="Leatherwood J."/>
            <person name="Levin H."/>
            <person name="Margalit H."/>
            <person name="Martienssen R."/>
            <person name="Nieduszynski C.A."/>
            <person name="Spatafora J.W."/>
            <person name="Friedman N."/>
            <person name="Dalgaard J.Z."/>
            <person name="Baumann P."/>
            <person name="Niki H."/>
            <person name="Regev A."/>
            <person name="Nusbaum C."/>
        </authorList>
    </citation>
    <scope>REVISION OF GENE MODEL</scope>
</reference>
<reference key="3">
    <citation type="journal article" date="2006" name="Nat. Biotechnol.">
        <title>ORFeome cloning and global analysis of protein localization in the fission yeast Schizosaccharomyces pombe.</title>
        <authorList>
            <person name="Matsuyama A."/>
            <person name="Arai R."/>
            <person name="Yashiroda Y."/>
            <person name="Shirai A."/>
            <person name="Kamata A."/>
            <person name="Sekido S."/>
            <person name="Kobayashi Y."/>
            <person name="Hashimoto A."/>
            <person name="Hamamoto M."/>
            <person name="Hiraoka Y."/>
            <person name="Horinouchi S."/>
            <person name="Yoshida M."/>
        </authorList>
    </citation>
    <scope>IDENTIFICATION OF FRAMESHIFT</scope>
    <source>
        <strain>972 / ATCC 24843</strain>
        <strain>JY3</strain>
    </source>
</reference>
<reference key="4">
    <citation type="journal article" date="2008" name="J. Proteome Res.">
        <title>Phosphoproteome analysis of fission yeast.</title>
        <authorList>
            <person name="Wilson-Grady J.T."/>
            <person name="Villen J."/>
            <person name="Gygi S.P."/>
        </authorList>
    </citation>
    <scope>PHOSPHORYLATION [LARGE SCALE ANALYSIS] AT SER-328; SER-330 AND SER-331</scope>
    <scope>IDENTIFICATION BY MASS SPECTROMETRY</scope>
</reference>
<reference key="5">
    <citation type="journal article" date="2011" name="Genetics">
        <title>Augmented annotation of the Schizosaccharomyces pombe genome reveals additional genes required for growth and viability.</title>
        <authorList>
            <person name="Bitton D.A."/>
            <person name="Wood V."/>
            <person name="Scutt P.J."/>
            <person name="Grallert A."/>
            <person name="Yates T."/>
            <person name="Smith D.L."/>
            <person name="Hagan I.M."/>
            <person name="Miller C.J."/>
        </authorList>
    </citation>
    <scope>IDENTIFICATION BY MASS SPECTROMETRY</scope>
</reference>
<dbReference type="EMBL" id="CU329672">
    <property type="protein sequence ID" value="CAA21438.3"/>
    <property type="status" value="ALT_FRAME"/>
    <property type="molecule type" value="Genomic_DNA"/>
</dbReference>
<dbReference type="PIR" id="T40969">
    <property type="entry name" value="T40969"/>
</dbReference>
<dbReference type="SMR" id="O94577"/>
<dbReference type="STRING" id="284812.O94577"/>
<dbReference type="iPTMnet" id="O94577"/>
<dbReference type="PaxDb" id="4896-SPCC1442.04c.1"/>
<dbReference type="KEGG" id="spo:3361128"/>
<dbReference type="PomBase" id="SPCC1442.04c"/>
<dbReference type="eggNOG" id="ENOG502SAQ9">
    <property type="taxonomic scope" value="Eukaryota"/>
</dbReference>
<dbReference type="HOGENOM" id="CLU_545320_0_0_1"/>
<dbReference type="InParanoid" id="O94577"/>
<dbReference type="PRO" id="PR:O94577"/>
<dbReference type="Proteomes" id="UP000002485">
    <property type="component" value="Chromosome III"/>
</dbReference>
<dbReference type="GO" id="GO:0005737">
    <property type="term" value="C:cytoplasm"/>
    <property type="evidence" value="ECO:0000266"/>
    <property type="project" value="PomBase"/>
</dbReference>
<dbReference type="GO" id="GO:0005634">
    <property type="term" value="C:nucleus"/>
    <property type="evidence" value="ECO:0000266"/>
    <property type="project" value="PomBase"/>
</dbReference>
<dbReference type="GO" id="GO:0051321">
    <property type="term" value="P:meiotic cell cycle"/>
    <property type="evidence" value="ECO:0007669"/>
    <property type="project" value="UniProtKB-KW"/>
</dbReference>
<dbReference type="InterPro" id="IPR018822">
    <property type="entry name" value="UPF0646"/>
</dbReference>
<dbReference type="Pfam" id="PF10336">
    <property type="entry name" value="DUF2420"/>
    <property type="match status" value="1"/>
</dbReference>
<comment type="function">
    <text evidence="1">Required for normal levels of gene conversion events during meiosis.</text>
</comment>
<comment type="subcellular location">
    <subcellularLocation>
        <location evidence="1">Cytoplasm</location>
    </subcellularLocation>
    <subcellularLocation>
        <location evidence="1">Nucleus</location>
    </subcellularLocation>
</comment>
<comment type="similarity">
    <text evidence="4">Belongs to the RMR1 family.</text>
</comment>
<comment type="sequence caution" evidence="4">
    <conflict type="frameshift">
        <sequence resource="EMBL-CDS" id="CAA21438"/>
    </conflict>
</comment>
<organism>
    <name type="scientific">Schizosaccharomyces pombe (strain 972 / ATCC 24843)</name>
    <name type="common">Fission yeast</name>
    <dbReference type="NCBI Taxonomy" id="284812"/>
    <lineage>
        <taxon>Eukaryota</taxon>
        <taxon>Fungi</taxon>
        <taxon>Dikarya</taxon>
        <taxon>Ascomycota</taxon>
        <taxon>Taphrinomycotina</taxon>
        <taxon>Schizosaccharomycetes</taxon>
        <taxon>Schizosaccharomycetales</taxon>
        <taxon>Schizosaccharomycetaceae</taxon>
        <taxon>Schizosaccharomyces</taxon>
    </lineage>
</organism>